<evidence type="ECO:0000255" key="1">
    <source>
        <dbReference type="HAMAP-Rule" id="MF_00501"/>
    </source>
</evidence>
<evidence type="ECO:0000305" key="2"/>
<name>RL31_CALS4</name>
<accession>Q8RDA2</accession>
<protein>
    <recommendedName>
        <fullName evidence="1">Large ribosomal subunit protein bL31</fullName>
    </recommendedName>
    <alternativeName>
        <fullName evidence="2">50S ribosomal protein L31</fullName>
    </alternativeName>
</protein>
<gene>
    <name evidence="1" type="primary">rpmE</name>
    <name type="ordered locus">TTE0139</name>
</gene>
<sequence length="69" mass="7933">MKPGIHPTYYHDAVVKCACGNTFITGSTKKEIRVEICSKCHPFFTGQQKIVDTGGRVERFRKRFNLEEK</sequence>
<dbReference type="EMBL" id="AE008691">
    <property type="protein sequence ID" value="AAM23443.1"/>
    <property type="molecule type" value="Genomic_DNA"/>
</dbReference>
<dbReference type="RefSeq" id="WP_011024645.1">
    <property type="nucleotide sequence ID" value="NZ_JANUCV010000001.1"/>
</dbReference>
<dbReference type="SMR" id="Q8RDA2"/>
<dbReference type="STRING" id="273068.TTE0139"/>
<dbReference type="KEGG" id="tte:TTE0139"/>
<dbReference type="eggNOG" id="COG0254">
    <property type="taxonomic scope" value="Bacteria"/>
</dbReference>
<dbReference type="HOGENOM" id="CLU_114306_4_3_9"/>
<dbReference type="OrthoDB" id="9803251at2"/>
<dbReference type="Proteomes" id="UP000000555">
    <property type="component" value="Chromosome"/>
</dbReference>
<dbReference type="GO" id="GO:1990904">
    <property type="term" value="C:ribonucleoprotein complex"/>
    <property type="evidence" value="ECO:0007669"/>
    <property type="project" value="UniProtKB-KW"/>
</dbReference>
<dbReference type="GO" id="GO:0005840">
    <property type="term" value="C:ribosome"/>
    <property type="evidence" value="ECO:0007669"/>
    <property type="project" value="UniProtKB-KW"/>
</dbReference>
<dbReference type="GO" id="GO:0046872">
    <property type="term" value="F:metal ion binding"/>
    <property type="evidence" value="ECO:0007669"/>
    <property type="project" value="UniProtKB-KW"/>
</dbReference>
<dbReference type="GO" id="GO:0019843">
    <property type="term" value="F:rRNA binding"/>
    <property type="evidence" value="ECO:0007669"/>
    <property type="project" value="UniProtKB-KW"/>
</dbReference>
<dbReference type="GO" id="GO:0003735">
    <property type="term" value="F:structural constituent of ribosome"/>
    <property type="evidence" value="ECO:0007669"/>
    <property type="project" value="InterPro"/>
</dbReference>
<dbReference type="GO" id="GO:0006412">
    <property type="term" value="P:translation"/>
    <property type="evidence" value="ECO:0007669"/>
    <property type="project" value="UniProtKB-UniRule"/>
</dbReference>
<dbReference type="Gene3D" id="4.10.830.30">
    <property type="entry name" value="Ribosomal protein L31"/>
    <property type="match status" value="1"/>
</dbReference>
<dbReference type="HAMAP" id="MF_00501">
    <property type="entry name" value="Ribosomal_bL31_1"/>
    <property type="match status" value="1"/>
</dbReference>
<dbReference type="InterPro" id="IPR034704">
    <property type="entry name" value="Ribosomal_bL28/bL31-like_sf"/>
</dbReference>
<dbReference type="InterPro" id="IPR002150">
    <property type="entry name" value="Ribosomal_bL31"/>
</dbReference>
<dbReference type="InterPro" id="IPR027491">
    <property type="entry name" value="Ribosomal_bL31_A"/>
</dbReference>
<dbReference type="InterPro" id="IPR042105">
    <property type="entry name" value="Ribosomal_bL31_sf"/>
</dbReference>
<dbReference type="NCBIfam" id="TIGR00105">
    <property type="entry name" value="L31"/>
    <property type="match status" value="1"/>
</dbReference>
<dbReference type="NCBIfam" id="NF000612">
    <property type="entry name" value="PRK00019.1"/>
    <property type="match status" value="1"/>
</dbReference>
<dbReference type="NCBIfam" id="NF001809">
    <property type="entry name" value="PRK00528.1"/>
    <property type="match status" value="1"/>
</dbReference>
<dbReference type="PANTHER" id="PTHR33280">
    <property type="entry name" value="50S RIBOSOMAL PROTEIN L31, CHLOROPLASTIC"/>
    <property type="match status" value="1"/>
</dbReference>
<dbReference type="PANTHER" id="PTHR33280:SF1">
    <property type="entry name" value="LARGE RIBOSOMAL SUBUNIT PROTEIN BL31C"/>
    <property type="match status" value="1"/>
</dbReference>
<dbReference type="Pfam" id="PF01197">
    <property type="entry name" value="Ribosomal_L31"/>
    <property type="match status" value="1"/>
</dbReference>
<dbReference type="PRINTS" id="PR01249">
    <property type="entry name" value="RIBOSOMALL31"/>
</dbReference>
<dbReference type="SUPFAM" id="SSF143800">
    <property type="entry name" value="L28p-like"/>
    <property type="match status" value="1"/>
</dbReference>
<dbReference type="PROSITE" id="PS01143">
    <property type="entry name" value="RIBOSOMAL_L31"/>
    <property type="match status" value="1"/>
</dbReference>
<feature type="chain" id="PRO_0000173172" description="Large ribosomal subunit protein bL31">
    <location>
        <begin position="1"/>
        <end position="69"/>
    </location>
</feature>
<feature type="binding site" evidence="1">
    <location>
        <position position="17"/>
    </location>
    <ligand>
        <name>Zn(2+)</name>
        <dbReference type="ChEBI" id="CHEBI:29105"/>
    </ligand>
</feature>
<feature type="binding site" evidence="1">
    <location>
        <position position="19"/>
    </location>
    <ligand>
        <name>Zn(2+)</name>
        <dbReference type="ChEBI" id="CHEBI:29105"/>
    </ligand>
</feature>
<feature type="binding site" evidence="1">
    <location>
        <position position="37"/>
    </location>
    <ligand>
        <name>Zn(2+)</name>
        <dbReference type="ChEBI" id="CHEBI:29105"/>
    </ligand>
</feature>
<feature type="binding site" evidence="1">
    <location>
        <position position="40"/>
    </location>
    <ligand>
        <name>Zn(2+)</name>
        <dbReference type="ChEBI" id="CHEBI:29105"/>
    </ligand>
</feature>
<keyword id="KW-0479">Metal-binding</keyword>
<keyword id="KW-1185">Reference proteome</keyword>
<keyword id="KW-0687">Ribonucleoprotein</keyword>
<keyword id="KW-0689">Ribosomal protein</keyword>
<keyword id="KW-0694">RNA-binding</keyword>
<keyword id="KW-0699">rRNA-binding</keyword>
<keyword id="KW-0862">Zinc</keyword>
<proteinExistence type="inferred from homology"/>
<reference key="1">
    <citation type="journal article" date="2002" name="Genome Res.">
        <title>A complete sequence of the T. tengcongensis genome.</title>
        <authorList>
            <person name="Bao Q."/>
            <person name="Tian Y."/>
            <person name="Li W."/>
            <person name="Xu Z."/>
            <person name="Xuan Z."/>
            <person name="Hu S."/>
            <person name="Dong W."/>
            <person name="Yang J."/>
            <person name="Chen Y."/>
            <person name="Xue Y."/>
            <person name="Xu Y."/>
            <person name="Lai X."/>
            <person name="Huang L."/>
            <person name="Dong X."/>
            <person name="Ma Y."/>
            <person name="Ling L."/>
            <person name="Tan H."/>
            <person name="Chen R."/>
            <person name="Wang J."/>
            <person name="Yu J."/>
            <person name="Yang H."/>
        </authorList>
    </citation>
    <scope>NUCLEOTIDE SEQUENCE [LARGE SCALE GENOMIC DNA]</scope>
    <source>
        <strain>DSM 15242 / JCM 11007 / NBRC 100824 / MB4</strain>
    </source>
</reference>
<comment type="function">
    <text evidence="1">Binds the 23S rRNA.</text>
</comment>
<comment type="cofactor">
    <cofactor evidence="1">
        <name>Zn(2+)</name>
        <dbReference type="ChEBI" id="CHEBI:29105"/>
    </cofactor>
    <text evidence="1">Binds 1 zinc ion per subunit.</text>
</comment>
<comment type="subunit">
    <text evidence="1">Part of the 50S ribosomal subunit.</text>
</comment>
<comment type="similarity">
    <text evidence="1">Belongs to the bacterial ribosomal protein bL31 family. Type A subfamily.</text>
</comment>
<organism>
    <name type="scientific">Caldanaerobacter subterraneus subsp. tengcongensis (strain DSM 15242 / JCM 11007 / NBRC 100824 / MB4)</name>
    <name type="common">Thermoanaerobacter tengcongensis</name>
    <dbReference type="NCBI Taxonomy" id="273068"/>
    <lineage>
        <taxon>Bacteria</taxon>
        <taxon>Bacillati</taxon>
        <taxon>Bacillota</taxon>
        <taxon>Clostridia</taxon>
        <taxon>Thermoanaerobacterales</taxon>
        <taxon>Thermoanaerobacteraceae</taxon>
        <taxon>Caldanaerobacter</taxon>
    </lineage>
</organism>